<dbReference type="EC" id="3.6.1.41" evidence="1"/>
<dbReference type="EMBL" id="AE016853">
    <property type="protein sequence ID" value="AAO54091.1"/>
    <property type="molecule type" value="Genomic_DNA"/>
</dbReference>
<dbReference type="RefSeq" id="NP_790396.1">
    <property type="nucleotide sequence ID" value="NC_004578.1"/>
</dbReference>
<dbReference type="RefSeq" id="WP_011103186.1">
    <property type="nucleotide sequence ID" value="NC_004578.1"/>
</dbReference>
<dbReference type="SMR" id="Q88A48"/>
<dbReference type="STRING" id="223283.PSPTO_0549"/>
<dbReference type="GeneID" id="1182159"/>
<dbReference type="KEGG" id="pst:PSPTO_0549"/>
<dbReference type="PATRIC" id="fig|223283.9.peg.559"/>
<dbReference type="eggNOG" id="COG0639">
    <property type="taxonomic scope" value="Bacteria"/>
</dbReference>
<dbReference type="HOGENOM" id="CLU_056184_2_0_6"/>
<dbReference type="OrthoDB" id="9807890at2"/>
<dbReference type="PhylomeDB" id="Q88A48"/>
<dbReference type="Proteomes" id="UP000002515">
    <property type="component" value="Chromosome"/>
</dbReference>
<dbReference type="GO" id="GO:0008803">
    <property type="term" value="F:bis(5'-nucleosyl)-tetraphosphatase (symmetrical) activity"/>
    <property type="evidence" value="ECO:0007669"/>
    <property type="project" value="UniProtKB-UniRule"/>
</dbReference>
<dbReference type="CDD" id="cd07422">
    <property type="entry name" value="MPP_ApaH"/>
    <property type="match status" value="1"/>
</dbReference>
<dbReference type="Gene3D" id="3.60.21.10">
    <property type="match status" value="1"/>
</dbReference>
<dbReference type="HAMAP" id="MF_00199">
    <property type="entry name" value="ApaH"/>
    <property type="match status" value="1"/>
</dbReference>
<dbReference type="InterPro" id="IPR004617">
    <property type="entry name" value="ApaH"/>
</dbReference>
<dbReference type="InterPro" id="IPR004843">
    <property type="entry name" value="Calcineurin-like_PHP_ApaH"/>
</dbReference>
<dbReference type="InterPro" id="IPR029052">
    <property type="entry name" value="Metallo-depent_PP-like"/>
</dbReference>
<dbReference type="NCBIfam" id="TIGR00668">
    <property type="entry name" value="apaH"/>
    <property type="match status" value="1"/>
</dbReference>
<dbReference type="NCBIfam" id="NF001204">
    <property type="entry name" value="PRK00166.1"/>
    <property type="match status" value="1"/>
</dbReference>
<dbReference type="PANTHER" id="PTHR40942">
    <property type="match status" value="1"/>
</dbReference>
<dbReference type="PANTHER" id="PTHR40942:SF4">
    <property type="entry name" value="CYTOCHROME C5"/>
    <property type="match status" value="1"/>
</dbReference>
<dbReference type="Pfam" id="PF00149">
    <property type="entry name" value="Metallophos"/>
    <property type="match status" value="1"/>
</dbReference>
<dbReference type="PIRSF" id="PIRSF000903">
    <property type="entry name" value="B5n-ttraPtase_sm"/>
    <property type="match status" value="1"/>
</dbReference>
<dbReference type="SUPFAM" id="SSF56300">
    <property type="entry name" value="Metallo-dependent phosphatases"/>
    <property type="match status" value="1"/>
</dbReference>
<keyword id="KW-0378">Hydrolase</keyword>
<keyword id="KW-1185">Reference proteome</keyword>
<accession>Q88A48</accession>
<evidence type="ECO:0000255" key="1">
    <source>
        <dbReference type="HAMAP-Rule" id="MF_00199"/>
    </source>
</evidence>
<reference key="1">
    <citation type="journal article" date="2003" name="Proc. Natl. Acad. Sci. U.S.A.">
        <title>The complete genome sequence of the Arabidopsis and tomato pathogen Pseudomonas syringae pv. tomato DC3000.</title>
        <authorList>
            <person name="Buell C.R."/>
            <person name="Joardar V."/>
            <person name="Lindeberg M."/>
            <person name="Selengut J."/>
            <person name="Paulsen I.T."/>
            <person name="Gwinn M.L."/>
            <person name="Dodson R.J."/>
            <person name="DeBoy R.T."/>
            <person name="Durkin A.S."/>
            <person name="Kolonay J.F."/>
            <person name="Madupu R."/>
            <person name="Daugherty S.C."/>
            <person name="Brinkac L.M."/>
            <person name="Beanan M.J."/>
            <person name="Haft D.H."/>
            <person name="Nelson W.C."/>
            <person name="Davidsen T.M."/>
            <person name="Zafar N."/>
            <person name="Zhou L."/>
            <person name="Liu J."/>
            <person name="Yuan Q."/>
            <person name="Khouri H.M."/>
            <person name="Fedorova N.B."/>
            <person name="Tran B."/>
            <person name="Russell D."/>
            <person name="Berry K.J."/>
            <person name="Utterback T.R."/>
            <person name="Van Aken S.E."/>
            <person name="Feldblyum T.V."/>
            <person name="D'Ascenzo M."/>
            <person name="Deng W.-L."/>
            <person name="Ramos A.R."/>
            <person name="Alfano J.R."/>
            <person name="Cartinhour S."/>
            <person name="Chatterjee A.K."/>
            <person name="Delaney T.P."/>
            <person name="Lazarowitz S.G."/>
            <person name="Martin G.B."/>
            <person name="Schneider D.J."/>
            <person name="Tang X."/>
            <person name="Bender C.L."/>
            <person name="White O."/>
            <person name="Fraser C.M."/>
            <person name="Collmer A."/>
        </authorList>
    </citation>
    <scope>NUCLEOTIDE SEQUENCE [LARGE SCALE GENOMIC DNA]</scope>
    <source>
        <strain>ATCC BAA-871 / DC3000</strain>
    </source>
</reference>
<feature type="chain" id="PRO_0000198006" description="Bis(5'-nucleosyl)-tetraphosphatase, symmetrical">
    <location>
        <begin position="1"/>
        <end position="300"/>
    </location>
</feature>
<protein>
    <recommendedName>
        <fullName evidence="1">Bis(5'-nucleosyl)-tetraphosphatase, symmetrical</fullName>
        <ecNumber evidence="1">3.6.1.41</ecNumber>
    </recommendedName>
    <alternativeName>
        <fullName evidence="1">Ap4A hydrolase</fullName>
    </alternativeName>
    <alternativeName>
        <fullName evidence="1">Diadenosine 5',5'''-P1,P4-tetraphosphate pyrophosphohydrolase</fullName>
    </alternativeName>
    <alternativeName>
        <fullName evidence="1">Diadenosine tetraphosphatase</fullName>
    </alternativeName>
</protein>
<name>APAH_PSESM</name>
<sequence>MAVYAVGDLQGCLEPLQCLLEHVRFDPVQDRLWLVGDLVNRGPQSLQTLRYLYSIRESLVCVLGNHDLHLLAVARKNELLKKGDTLREILEAPDRDELLRWVRQQKLMHYDAERNIAMVHAGIAPQWSVKKALKQAAEVEHALQDDQLYGAFLDGMYGNEPAKWNNDLQGVTRLRVITNYFTRMRFCTSDGKLDLKSKEGVGTAIPGYAPWFSHQNRKTRDVKIIFGHWAALEGRCDEPGVFALDSGCVWGGAMTLLNVDTLERHQCNCDAVGNAATGIIASAQPGNAHIQQIPAQEPKQ</sequence>
<organism>
    <name type="scientific">Pseudomonas syringae pv. tomato (strain ATCC BAA-871 / DC3000)</name>
    <dbReference type="NCBI Taxonomy" id="223283"/>
    <lineage>
        <taxon>Bacteria</taxon>
        <taxon>Pseudomonadati</taxon>
        <taxon>Pseudomonadota</taxon>
        <taxon>Gammaproteobacteria</taxon>
        <taxon>Pseudomonadales</taxon>
        <taxon>Pseudomonadaceae</taxon>
        <taxon>Pseudomonas</taxon>
    </lineage>
</organism>
<comment type="function">
    <text evidence="1">Hydrolyzes diadenosine 5',5'''-P1,P4-tetraphosphate to yield ADP.</text>
</comment>
<comment type="catalytic activity">
    <reaction evidence="1">
        <text>P(1),P(4)-bis(5'-adenosyl) tetraphosphate + H2O = 2 ADP + 2 H(+)</text>
        <dbReference type="Rhea" id="RHEA:24252"/>
        <dbReference type="ChEBI" id="CHEBI:15377"/>
        <dbReference type="ChEBI" id="CHEBI:15378"/>
        <dbReference type="ChEBI" id="CHEBI:58141"/>
        <dbReference type="ChEBI" id="CHEBI:456216"/>
        <dbReference type="EC" id="3.6.1.41"/>
    </reaction>
</comment>
<comment type="similarity">
    <text evidence="1">Belongs to the Ap4A hydrolase family.</text>
</comment>
<proteinExistence type="inferred from homology"/>
<gene>
    <name evidence="1" type="primary">apaH</name>
    <name type="ordered locus">PSPTO_0549</name>
</gene>